<evidence type="ECO:0000255" key="1">
    <source>
        <dbReference type="HAMAP-Rule" id="MF_00235"/>
    </source>
</evidence>
<gene>
    <name evidence="1" type="primary">adk</name>
    <name type="ordered locus">PputW619_4111</name>
</gene>
<dbReference type="EC" id="2.7.4.3" evidence="1"/>
<dbReference type="EMBL" id="CP000949">
    <property type="protein sequence ID" value="ACA74591.1"/>
    <property type="molecule type" value="Genomic_DNA"/>
</dbReference>
<dbReference type="SMR" id="B1JD29"/>
<dbReference type="STRING" id="390235.PputW619_4111"/>
<dbReference type="KEGG" id="ppw:PputW619_4111"/>
<dbReference type="eggNOG" id="COG0563">
    <property type="taxonomic scope" value="Bacteria"/>
</dbReference>
<dbReference type="HOGENOM" id="CLU_032354_1_2_6"/>
<dbReference type="OrthoDB" id="9805030at2"/>
<dbReference type="UniPathway" id="UPA00588">
    <property type="reaction ID" value="UER00649"/>
</dbReference>
<dbReference type="GO" id="GO:0005737">
    <property type="term" value="C:cytoplasm"/>
    <property type="evidence" value="ECO:0007669"/>
    <property type="project" value="UniProtKB-SubCell"/>
</dbReference>
<dbReference type="GO" id="GO:0004017">
    <property type="term" value="F:adenylate kinase activity"/>
    <property type="evidence" value="ECO:0007669"/>
    <property type="project" value="UniProtKB-UniRule"/>
</dbReference>
<dbReference type="GO" id="GO:0005524">
    <property type="term" value="F:ATP binding"/>
    <property type="evidence" value="ECO:0007669"/>
    <property type="project" value="UniProtKB-UniRule"/>
</dbReference>
<dbReference type="GO" id="GO:0044209">
    <property type="term" value="P:AMP salvage"/>
    <property type="evidence" value="ECO:0007669"/>
    <property type="project" value="UniProtKB-UniRule"/>
</dbReference>
<dbReference type="CDD" id="cd01428">
    <property type="entry name" value="ADK"/>
    <property type="match status" value="1"/>
</dbReference>
<dbReference type="FunFam" id="3.40.50.300:FF:000106">
    <property type="entry name" value="Adenylate kinase mitochondrial"/>
    <property type="match status" value="1"/>
</dbReference>
<dbReference type="Gene3D" id="3.40.50.300">
    <property type="entry name" value="P-loop containing nucleotide triphosphate hydrolases"/>
    <property type="match status" value="1"/>
</dbReference>
<dbReference type="HAMAP" id="MF_00235">
    <property type="entry name" value="Adenylate_kinase_Adk"/>
    <property type="match status" value="1"/>
</dbReference>
<dbReference type="InterPro" id="IPR006259">
    <property type="entry name" value="Adenyl_kin_sub"/>
</dbReference>
<dbReference type="InterPro" id="IPR000850">
    <property type="entry name" value="Adenylat/UMP-CMP_kin"/>
</dbReference>
<dbReference type="InterPro" id="IPR033690">
    <property type="entry name" value="Adenylat_kinase_CS"/>
</dbReference>
<dbReference type="InterPro" id="IPR007862">
    <property type="entry name" value="Adenylate_kinase_lid-dom"/>
</dbReference>
<dbReference type="InterPro" id="IPR027417">
    <property type="entry name" value="P-loop_NTPase"/>
</dbReference>
<dbReference type="NCBIfam" id="TIGR01351">
    <property type="entry name" value="adk"/>
    <property type="match status" value="1"/>
</dbReference>
<dbReference type="NCBIfam" id="NF001379">
    <property type="entry name" value="PRK00279.1-1"/>
    <property type="match status" value="1"/>
</dbReference>
<dbReference type="NCBIfam" id="NF001380">
    <property type="entry name" value="PRK00279.1-2"/>
    <property type="match status" value="1"/>
</dbReference>
<dbReference type="NCBIfam" id="NF001381">
    <property type="entry name" value="PRK00279.1-3"/>
    <property type="match status" value="1"/>
</dbReference>
<dbReference type="NCBIfam" id="NF011100">
    <property type="entry name" value="PRK14527.1"/>
    <property type="match status" value="1"/>
</dbReference>
<dbReference type="PANTHER" id="PTHR23359">
    <property type="entry name" value="NUCLEOTIDE KINASE"/>
    <property type="match status" value="1"/>
</dbReference>
<dbReference type="Pfam" id="PF00406">
    <property type="entry name" value="ADK"/>
    <property type="match status" value="1"/>
</dbReference>
<dbReference type="Pfam" id="PF05191">
    <property type="entry name" value="ADK_lid"/>
    <property type="match status" value="1"/>
</dbReference>
<dbReference type="PRINTS" id="PR00094">
    <property type="entry name" value="ADENYLTKNASE"/>
</dbReference>
<dbReference type="SUPFAM" id="SSF52540">
    <property type="entry name" value="P-loop containing nucleoside triphosphate hydrolases"/>
    <property type="match status" value="1"/>
</dbReference>
<dbReference type="PROSITE" id="PS00113">
    <property type="entry name" value="ADENYLATE_KINASE"/>
    <property type="match status" value="1"/>
</dbReference>
<organism>
    <name type="scientific">Pseudomonas putida (strain W619)</name>
    <dbReference type="NCBI Taxonomy" id="390235"/>
    <lineage>
        <taxon>Bacteria</taxon>
        <taxon>Pseudomonadati</taxon>
        <taxon>Pseudomonadota</taxon>
        <taxon>Gammaproteobacteria</taxon>
        <taxon>Pseudomonadales</taxon>
        <taxon>Pseudomonadaceae</taxon>
        <taxon>Pseudomonas</taxon>
    </lineage>
</organism>
<proteinExistence type="inferred from homology"/>
<name>KAD_PSEPW</name>
<reference key="1">
    <citation type="submission" date="2008-02" db="EMBL/GenBank/DDBJ databases">
        <title>Complete sequence of Pseudomonas putida W619.</title>
        <authorList>
            <person name="Copeland A."/>
            <person name="Lucas S."/>
            <person name="Lapidus A."/>
            <person name="Barry K."/>
            <person name="Detter J.C."/>
            <person name="Glavina del Rio T."/>
            <person name="Dalin E."/>
            <person name="Tice H."/>
            <person name="Pitluck S."/>
            <person name="Chain P."/>
            <person name="Malfatti S."/>
            <person name="Shin M."/>
            <person name="Vergez L."/>
            <person name="Schmutz J."/>
            <person name="Larimer F."/>
            <person name="Land M."/>
            <person name="Hauser L."/>
            <person name="Kyrpides N."/>
            <person name="Kim E."/>
            <person name="Taghavi S."/>
            <person name="Vangronsveld D."/>
            <person name="van der Lelie D."/>
            <person name="Richardson P."/>
        </authorList>
    </citation>
    <scope>NUCLEOTIDE SEQUENCE [LARGE SCALE GENOMIC DNA]</scope>
    <source>
        <strain>W619</strain>
    </source>
</reference>
<accession>B1JD29</accession>
<comment type="function">
    <text evidence="1">Catalyzes the reversible transfer of the terminal phosphate group between ATP and AMP. Plays an important role in cellular energy homeostasis and in adenine nucleotide metabolism.</text>
</comment>
<comment type="catalytic activity">
    <reaction evidence="1">
        <text>AMP + ATP = 2 ADP</text>
        <dbReference type="Rhea" id="RHEA:12973"/>
        <dbReference type="ChEBI" id="CHEBI:30616"/>
        <dbReference type="ChEBI" id="CHEBI:456215"/>
        <dbReference type="ChEBI" id="CHEBI:456216"/>
        <dbReference type="EC" id="2.7.4.3"/>
    </reaction>
</comment>
<comment type="pathway">
    <text evidence="1">Purine metabolism; AMP biosynthesis via salvage pathway; AMP from ADP: step 1/1.</text>
</comment>
<comment type="subunit">
    <text evidence="1">Monomer.</text>
</comment>
<comment type="subcellular location">
    <subcellularLocation>
        <location evidence="1">Cytoplasm</location>
    </subcellularLocation>
</comment>
<comment type="domain">
    <text evidence="1">Consists of three domains, a large central CORE domain and two small peripheral domains, NMPbind and LID, which undergo movements during catalysis. The LID domain closes over the site of phosphoryl transfer upon ATP binding. Assembling and dissambling the active center during each catalytic cycle provides an effective means to prevent ATP hydrolysis.</text>
</comment>
<comment type="similarity">
    <text evidence="1">Belongs to the adenylate kinase family.</text>
</comment>
<sequence length="216" mass="23207">MRVILLGAPGAGKGTQAKFITEKFGIPQISTGDMLRAAVKAGTPLGLELKKVMDAGQLVSDELIISLVKERIAQPDCANGCLFDGFPRTIPQAEAMVAAGVDIDAVVEIAVDDEEIVGRMAGRRVHLASGRTYHIQYNPPKVEGKDDVTGEDLIQRDDDKEETVRHRLSVYHTQTKPLVDFYQKLSAANAGKPKYSHIEGVGSVDAITAKVLAALS</sequence>
<keyword id="KW-0067">ATP-binding</keyword>
<keyword id="KW-0963">Cytoplasm</keyword>
<keyword id="KW-0418">Kinase</keyword>
<keyword id="KW-0545">Nucleotide biosynthesis</keyword>
<keyword id="KW-0547">Nucleotide-binding</keyword>
<keyword id="KW-0808">Transferase</keyword>
<protein>
    <recommendedName>
        <fullName evidence="1">Adenylate kinase</fullName>
        <shortName evidence="1">AK</shortName>
        <ecNumber evidence="1">2.7.4.3</ecNumber>
    </recommendedName>
    <alternativeName>
        <fullName evidence="1">ATP-AMP transphosphorylase</fullName>
    </alternativeName>
    <alternativeName>
        <fullName evidence="1">ATP:AMP phosphotransferase</fullName>
    </alternativeName>
    <alternativeName>
        <fullName evidence="1">Adenylate monophosphate kinase</fullName>
    </alternativeName>
</protein>
<feature type="chain" id="PRO_1000100596" description="Adenylate kinase">
    <location>
        <begin position="1"/>
        <end position="216"/>
    </location>
</feature>
<feature type="region of interest" description="NMP" evidence="1">
    <location>
        <begin position="30"/>
        <end position="59"/>
    </location>
</feature>
<feature type="region of interest" description="LID" evidence="1">
    <location>
        <begin position="122"/>
        <end position="159"/>
    </location>
</feature>
<feature type="binding site" evidence="1">
    <location>
        <begin position="10"/>
        <end position="15"/>
    </location>
    <ligand>
        <name>ATP</name>
        <dbReference type="ChEBI" id="CHEBI:30616"/>
    </ligand>
</feature>
<feature type="binding site" evidence="1">
    <location>
        <position position="31"/>
    </location>
    <ligand>
        <name>AMP</name>
        <dbReference type="ChEBI" id="CHEBI:456215"/>
    </ligand>
</feature>
<feature type="binding site" evidence="1">
    <location>
        <position position="36"/>
    </location>
    <ligand>
        <name>AMP</name>
        <dbReference type="ChEBI" id="CHEBI:456215"/>
    </ligand>
</feature>
<feature type="binding site" evidence="1">
    <location>
        <begin position="57"/>
        <end position="59"/>
    </location>
    <ligand>
        <name>AMP</name>
        <dbReference type="ChEBI" id="CHEBI:456215"/>
    </ligand>
</feature>
<feature type="binding site" evidence="1">
    <location>
        <begin position="85"/>
        <end position="88"/>
    </location>
    <ligand>
        <name>AMP</name>
        <dbReference type="ChEBI" id="CHEBI:456215"/>
    </ligand>
</feature>
<feature type="binding site" evidence="1">
    <location>
        <position position="92"/>
    </location>
    <ligand>
        <name>AMP</name>
        <dbReference type="ChEBI" id="CHEBI:456215"/>
    </ligand>
</feature>
<feature type="binding site" evidence="1">
    <location>
        <position position="123"/>
    </location>
    <ligand>
        <name>ATP</name>
        <dbReference type="ChEBI" id="CHEBI:30616"/>
    </ligand>
</feature>
<feature type="binding site" evidence="1">
    <location>
        <begin position="132"/>
        <end position="133"/>
    </location>
    <ligand>
        <name>ATP</name>
        <dbReference type="ChEBI" id="CHEBI:30616"/>
    </ligand>
</feature>
<feature type="binding site" evidence="1">
    <location>
        <position position="156"/>
    </location>
    <ligand>
        <name>AMP</name>
        <dbReference type="ChEBI" id="CHEBI:456215"/>
    </ligand>
</feature>
<feature type="binding site" evidence="1">
    <location>
        <position position="167"/>
    </location>
    <ligand>
        <name>AMP</name>
        <dbReference type="ChEBI" id="CHEBI:456215"/>
    </ligand>
</feature>
<feature type="binding site" evidence="1">
    <location>
        <position position="202"/>
    </location>
    <ligand>
        <name>ATP</name>
        <dbReference type="ChEBI" id="CHEBI:30616"/>
    </ligand>
</feature>